<proteinExistence type="inferred from homology"/>
<organism>
    <name type="scientific">Leuconostoc mesenteroides subsp. mesenteroides (strain ATCC 8293 / DSM 20343 / BCRC 11652 / CCM 1803 / JCM 6124 / NCDO 523 / NBRC 100496 / NCIMB 8023 / NCTC 12954 / NRRL B-1118 / 37Y)</name>
    <dbReference type="NCBI Taxonomy" id="203120"/>
    <lineage>
        <taxon>Bacteria</taxon>
        <taxon>Bacillati</taxon>
        <taxon>Bacillota</taxon>
        <taxon>Bacilli</taxon>
        <taxon>Lactobacillales</taxon>
        <taxon>Lactobacillaceae</taxon>
        <taxon>Leuconostoc</taxon>
    </lineage>
</organism>
<sequence length="259" mass="29836">MAIIRGIVLYTRQYKDNDLLVRILTETYGMRTFLARGAKKATSKLSAGTQPYTIVTFDGALPKRETGLGYMNDVQDIKVYSRLIEDIEANAYAALIASLIDASFEEGEKITRWYNQLYVALQKLDEGLDPQIIANIFEIQLLVPLGVAPNLRADPITGQVDGKFDYSEKYNGIISEHHFNLDDQRLMLDQKTVFYLRQFSVIDMRQVHDIKMSAITKRGLQRVIDYIYEKQVGLKPRAKSFIEQMHSWQNTLVNFRRNK</sequence>
<gene>
    <name evidence="1" type="primary">recO</name>
    <name type="ordered locus">LEUM_0781</name>
</gene>
<comment type="function">
    <text evidence="1">Involved in DNA repair and RecF pathway recombination.</text>
</comment>
<comment type="similarity">
    <text evidence="1">Belongs to the RecO family.</text>
</comment>
<name>RECO_LEUMM</name>
<dbReference type="EMBL" id="CP000414">
    <property type="protein sequence ID" value="ABJ61890.1"/>
    <property type="molecule type" value="Genomic_DNA"/>
</dbReference>
<dbReference type="RefSeq" id="WP_011679561.1">
    <property type="nucleotide sequence ID" value="NC_008531.1"/>
</dbReference>
<dbReference type="SMR" id="Q03Y32"/>
<dbReference type="EnsemblBacteria" id="ABJ61890">
    <property type="protein sequence ID" value="ABJ61890"/>
    <property type="gene ID" value="LEUM_0781"/>
</dbReference>
<dbReference type="GeneID" id="29576562"/>
<dbReference type="KEGG" id="lme:LEUM_0781"/>
<dbReference type="eggNOG" id="COG1381">
    <property type="taxonomic scope" value="Bacteria"/>
</dbReference>
<dbReference type="HOGENOM" id="CLU_066632_4_0_9"/>
<dbReference type="Proteomes" id="UP000000362">
    <property type="component" value="Chromosome"/>
</dbReference>
<dbReference type="GO" id="GO:0043590">
    <property type="term" value="C:bacterial nucleoid"/>
    <property type="evidence" value="ECO:0007669"/>
    <property type="project" value="TreeGrafter"/>
</dbReference>
<dbReference type="GO" id="GO:0006310">
    <property type="term" value="P:DNA recombination"/>
    <property type="evidence" value="ECO:0007669"/>
    <property type="project" value="UniProtKB-UniRule"/>
</dbReference>
<dbReference type="GO" id="GO:0006302">
    <property type="term" value="P:double-strand break repair"/>
    <property type="evidence" value="ECO:0007669"/>
    <property type="project" value="TreeGrafter"/>
</dbReference>
<dbReference type="Gene3D" id="2.40.50.140">
    <property type="entry name" value="Nucleic acid-binding proteins"/>
    <property type="match status" value="1"/>
</dbReference>
<dbReference type="Gene3D" id="1.20.1440.120">
    <property type="entry name" value="Recombination protein O, C-terminal domain"/>
    <property type="match status" value="1"/>
</dbReference>
<dbReference type="HAMAP" id="MF_00201">
    <property type="entry name" value="RecO"/>
    <property type="match status" value="1"/>
</dbReference>
<dbReference type="InterPro" id="IPR037278">
    <property type="entry name" value="ARFGAP/RecO"/>
</dbReference>
<dbReference type="InterPro" id="IPR022572">
    <property type="entry name" value="DNA_rep/recomb_RecO_N"/>
</dbReference>
<dbReference type="InterPro" id="IPR012340">
    <property type="entry name" value="NA-bd_OB-fold"/>
</dbReference>
<dbReference type="InterPro" id="IPR003717">
    <property type="entry name" value="RecO"/>
</dbReference>
<dbReference type="InterPro" id="IPR042242">
    <property type="entry name" value="RecO_C"/>
</dbReference>
<dbReference type="NCBIfam" id="TIGR00613">
    <property type="entry name" value="reco"/>
    <property type="match status" value="1"/>
</dbReference>
<dbReference type="PANTHER" id="PTHR33991">
    <property type="entry name" value="DNA REPAIR PROTEIN RECO"/>
    <property type="match status" value="1"/>
</dbReference>
<dbReference type="PANTHER" id="PTHR33991:SF1">
    <property type="entry name" value="DNA REPAIR PROTEIN RECO"/>
    <property type="match status" value="1"/>
</dbReference>
<dbReference type="Pfam" id="PF02565">
    <property type="entry name" value="RecO_C"/>
    <property type="match status" value="1"/>
</dbReference>
<dbReference type="Pfam" id="PF11967">
    <property type="entry name" value="RecO_N"/>
    <property type="match status" value="1"/>
</dbReference>
<dbReference type="SUPFAM" id="SSF57863">
    <property type="entry name" value="ArfGap/RecO-like zinc finger"/>
    <property type="match status" value="1"/>
</dbReference>
<dbReference type="SUPFAM" id="SSF50249">
    <property type="entry name" value="Nucleic acid-binding proteins"/>
    <property type="match status" value="1"/>
</dbReference>
<reference key="1">
    <citation type="journal article" date="2006" name="Proc. Natl. Acad. Sci. U.S.A.">
        <title>Comparative genomics of the lactic acid bacteria.</title>
        <authorList>
            <person name="Makarova K.S."/>
            <person name="Slesarev A."/>
            <person name="Wolf Y.I."/>
            <person name="Sorokin A."/>
            <person name="Mirkin B."/>
            <person name="Koonin E.V."/>
            <person name="Pavlov A."/>
            <person name="Pavlova N."/>
            <person name="Karamychev V."/>
            <person name="Polouchine N."/>
            <person name="Shakhova V."/>
            <person name="Grigoriev I."/>
            <person name="Lou Y."/>
            <person name="Rohksar D."/>
            <person name="Lucas S."/>
            <person name="Huang K."/>
            <person name="Goodstein D.M."/>
            <person name="Hawkins T."/>
            <person name="Plengvidhya V."/>
            <person name="Welker D."/>
            <person name="Hughes J."/>
            <person name="Goh Y."/>
            <person name="Benson A."/>
            <person name="Baldwin K."/>
            <person name="Lee J.-H."/>
            <person name="Diaz-Muniz I."/>
            <person name="Dosti B."/>
            <person name="Smeianov V."/>
            <person name="Wechter W."/>
            <person name="Barabote R."/>
            <person name="Lorca G."/>
            <person name="Altermann E."/>
            <person name="Barrangou R."/>
            <person name="Ganesan B."/>
            <person name="Xie Y."/>
            <person name="Rawsthorne H."/>
            <person name="Tamir D."/>
            <person name="Parker C."/>
            <person name="Breidt F."/>
            <person name="Broadbent J.R."/>
            <person name="Hutkins R."/>
            <person name="O'Sullivan D."/>
            <person name="Steele J."/>
            <person name="Unlu G."/>
            <person name="Saier M.H. Jr."/>
            <person name="Klaenhammer T."/>
            <person name="Richardson P."/>
            <person name="Kozyavkin S."/>
            <person name="Weimer B.C."/>
            <person name="Mills D.A."/>
        </authorList>
    </citation>
    <scope>NUCLEOTIDE SEQUENCE [LARGE SCALE GENOMIC DNA]</scope>
    <source>
        <strain>ATCC 8293 / DSM 20343 / BCRC 11652 / CCM 1803 / JCM 6124 / NCDO 523 / NBRC 100496 / NCIMB 8023 / NCTC 12954 / NRRL B-1118 / 37Y</strain>
    </source>
</reference>
<keyword id="KW-0227">DNA damage</keyword>
<keyword id="KW-0233">DNA recombination</keyword>
<keyword id="KW-0234">DNA repair</keyword>
<keyword id="KW-1185">Reference proteome</keyword>
<accession>Q03Y32</accession>
<protein>
    <recommendedName>
        <fullName evidence="1">DNA repair protein RecO</fullName>
    </recommendedName>
    <alternativeName>
        <fullName evidence="1">Recombination protein O</fullName>
    </alternativeName>
</protein>
<feature type="chain" id="PRO_0000325202" description="DNA repair protein RecO">
    <location>
        <begin position="1"/>
        <end position="259"/>
    </location>
</feature>
<evidence type="ECO:0000255" key="1">
    <source>
        <dbReference type="HAMAP-Rule" id="MF_00201"/>
    </source>
</evidence>